<gene>
    <name type="primary">MSMB</name>
    <name type="synonym">PRSP</name>
</gene>
<name>MSMB_HUMAN</name>
<organism>
    <name type="scientific">Homo sapiens</name>
    <name type="common">Human</name>
    <dbReference type="NCBI Taxonomy" id="9606"/>
    <lineage>
        <taxon>Eukaryota</taxon>
        <taxon>Metazoa</taxon>
        <taxon>Chordata</taxon>
        <taxon>Craniata</taxon>
        <taxon>Vertebrata</taxon>
        <taxon>Euteleostomi</taxon>
        <taxon>Mammalia</taxon>
        <taxon>Eutheria</taxon>
        <taxon>Euarchontoglires</taxon>
        <taxon>Primates</taxon>
        <taxon>Haplorrhini</taxon>
        <taxon>Catarrhini</taxon>
        <taxon>Hominidae</taxon>
        <taxon>Homo</taxon>
    </lineage>
</organism>
<sequence>MNVLLGSVVIFATFVTLCNASCYFIPNEGVPGDSTRKCMDLKGNKHPINSEWQTDNCETCTCYETEISCCTLVSTPVGYDKDNCQRIFKKEDCKYIVVEKKDPKKTCSVSEWII</sequence>
<proteinExistence type="evidence at protein level"/>
<protein>
    <recommendedName>
        <fullName>Beta-microseminoprotein</fullName>
    </recommendedName>
    <alternativeName>
        <fullName>Immunoglobulin-binding factor</fullName>
        <shortName>IGBF</shortName>
    </alternativeName>
    <alternativeName>
        <fullName>PN44</fullName>
    </alternativeName>
    <alternativeName>
        <fullName>Prostate secreted seminal plasma protein</fullName>
    </alternativeName>
    <alternativeName>
        <fullName>Prostate secretory protein of 94 amino acids</fullName>
        <shortName>PSP-94</shortName>
        <shortName>PSP94</shortName>
    </alternativeName>
    <alternativeName>
        <fullName>Seminal plasma beta-inhibin</fullName>
    </alternativeName>
</protein>
<evidence type="ECO:0000269" key="1">
    <source>
    </source>
</evidence>
<evidence type="ECO:0000269" key="2">
    <source>
    </source>
</evidence>
<evidence type="ECO:0000269" key="3">
    <source>
    </source>
</evidence>
<evidence type="ECO:0000269" key="4">
    <source>
    </source>
</evidence>
<evidence type="ECO:0000269" key="5">
    <source>
    </source>
</evidence>
<evidence type="ECO:0000269" key="6">
    <source>
    </source>
</evidence>
<evidence type="ECO:0000269" key="7">
    <source>
    </source>
</evidence>
<evidence type="ECO:0000269" key="8">
    <source>
    </source>
</evidence>
<evidence type="ECO:0000303" key="9">
    <source>
    </source>
</evidence>
<evidence type="ECO:0000305" key="10"/>
<evidence type="ECO:0007829" key="11">
    <source>
        <dbReference type="PDB" id="3IX0"/>
    </source>
</evidence>
<accession>P08118</accession>
<accession>B1API6</accession>
<accession>P11999</accession>
<accession>Q13125</accession>
<accession>Q6IAY9</accession>
<accession>Q9UC59</accession>
<dbReference type="EMBL" id="M15885">
    <property type="protein sequence ID" value="AAA36635.1"/>
    <property type="molecule type" value="mRNA"/>
</dbReference>
<dbReference type="EMBL" id="M34376">
    <property type="protein sequence ID" value="AAA59871.1"/>
    <property type="molecule type" value="Genomic_DNA"/>
</dbReference>
<dbReference type="EMBL" id="M34373">
    <property type="protein sequence ID" value="AAA59871.1"/>
    <property type="status" value="JOINED"/>
    <property type="molecule type" value="Genomic_DNA"/>
</dbReference>
<dbReference type="EMBL" id="M34374">
    <property type="protein sequence ID" value="AAA59871.1"/>
    <property type="status" value="JOINED"/>
    <property type="molecule type" value="Genomic_DNA"/>
</dbReference>
<dbReference type="EMBL" id="M34375">
    <property type="protein sequence ID" value="AAA59871.1"/>
    <property type="status" value="JOINED"/>
    <property type="molecule type" value="Genomic_DNA"/>
</dbReference>
<dbReference type="EMBL" id="X57928">
    <property type="protein sequence ID" value="CAA41002.1"/>
    <property type="molecule type" value="Genomic_DNA"/>
</dbReference>
<dbReference type="EMBL" id="X57929">
    <property type="protein sequence ID" value="CAA41002.1"/>
    <property type="status" value="JOINED"/>
    <property type="molecule type" value="Genomic_DNA"/>
</dbReference>
<dbReference type="EMBL" id="X57930">
    <property type="protein sequence ID" value="CAA41002.1"/>
    <property type="status" value="JOINED"/>
    <property type="molecule type" value="Genomic_DNA"/>
</dbReference>
<dbReference type="EMBL" id="X57931">
    <property type="protein sequence ID" value="CAA41002.1"/>
    <property type="status" value="JOINED"/>
    <property type="molecule type" value="Genomic_DNA"/>
</dbReference>
<dbReference type="EMBL" id="S67815">
    <property type="protein sequence ID" value="AAB29732.1"/>
    <property type="molecule type" value="mRNA"/>
</dbReference>
<dbReference type="EMBL" id="U22178">
    <property type="protein sequence ID" value="AAA83556.1"/>
    <property type="molecule type" value="mRNA"/>
</dbReference>
<dbReference type="EMBL" id="U78976">
    <property type="protein sequence ID" value="AAB37355.1"/>
    <property type="molecule type" value="mRNA"/>
</dbReference>
<dbReference type="EMBL" id="BT006816">
    <property type="protein sequence ID" value="AAP35462.1"/>
    <property type="molecule type" value="mRNA"/>
</dbReference>
<dbReference type="EMBL" id="CR457015">
    <property type="protein sequence ID" value="CAG33296.1"/>
    <property type="molecule type" value="mRNA"/>
</dbReference>
<dbReference type="EMBL" id="AL450342">
    <property type="status" value="NOT_ANNOTATED_CDS"/>
    <property type="molecule type" value="Genomic_DNA"/>
</dbReference>
<dbReference type="EMBL" id="BC005257">
    <property type="protein sequence ID" value="AAH05257.1"/>
    <property type="molecule type" value="mRNA"/>
</dbReference>
<dbReference type="EMBL" id="AJ133356">
    <property type="protein sequence ID" value="CAB39325.1"/>
    <property type="molecule type" value="Genomic_DNA"/>
</dbReference>
<dbReference type="CCDS" id="CCDS73095.1">
    <molecule id="P08118-2"/>
</dbReference>
<dbReference type="CCDS" id="CCDS73096.1">
    <molecule id="P08118-1"/>
</dbReference>
<dbReference type="PIR" id="A34567">
    <property type="entry name" value="A34567"/>
</dbReference>
<dbReference type="PIR" id="G01730">
    <property type="entry name" value="G01730"/>
</dbReference>
<dbReference type="RefSeq" id="NP_002434.1">
    <molecule id="P08118-1"/>
    <property type="nucleotide sequence ID" value="NM_002443.4"/>
</dbReference>
<dbReference type="RefSeq" id="NP_619540.1">
    <molecule id="P08118-2"/>
    <property type="nucleotide sequence ID" value="NM_138634.3"/>
</dbReference>
<dbReference type="PDB" id="2IZ3">
    <property type="method" value="NMR"/>
    <property type="chains" value="A=21-114"/>
</dbReference>
<dbReference type="PDB" id="3IX0">
    <property type="method" value="X-ray"/>
    <property type="resolution" value="2.30 A"/>
    <property type="chains" value="A/B/C/D=21-114"/>
</dbReference>
<dbReference type="PDBsum" id="2IZ3"/>
<dbReference type="PDBsum" id="3IX0"/>
<dbReference type="BMRB" id="P08118"/>
<dbReference type="SMR" id="P08118"/>
<dbReference type="BioGRID" id="110583">
    <property type="interactions" value="65"/>
</dbReference>
<dbReference type="FunCoup" id="P08118">
    <property type="interactions" value="65"/>
</dbReference>
<dbReference type="IntAct" id="P08118">
    <property type="interactions" value="36"/>
</dbReference>
<dbReference type="MINT" id="P08118"/>
<dbReference type="STRING" id="9606.ENSP00000463092"/>
<dbReference type="iPTMnet" id="P08118"/>
<dbReference type="PhosphoSitePlus" id="P08118"/>
<dbReference type="BioMuta" id="MSMB"/>
<dbReference type="DMDM" id="131436"/>
<dbReference type="MassIVE" id="P08118"/>
<dbReference type="PaxDb" id="9606-ENSP00000463092"/>
<dbReference type="PeptideAtlas" id="P08118"/>
<dbReference type="ProteomicsDB" id="52068">
    <molecule id="P08118-1"/>
</dbReference>
<dbReference type="Antibodypedia" id="72459">
    <property type="antibodies" value="772 antibodies from 31 providers"/>
</dbReference>
<dbReference type="DNASU" id="4477"/>
<dbReference type="Ensembl" id="ENST00000581478.5">
    <molecule id="P08118-2"/>
    <property type="protein sequence ID" value="ENSP00000462641.1"/>
    <property type="gene ID" value="ENSG00000263639.7"/>
</dbReference>
<dbReference type="Ensembl" id="ENST00000582163.3">
    <molecule id="P08118-1"/>
    <property type="protein sequence ID" value="ENSP00000463092.1"/>
    <property type="gene ID" value="ENSG00000263639.7"/>
</dbReference>
<dbReference type="GeneID" id="4477"/>
<dbReference type="KEGG" id="hsa:4477"/>
<dbReference type="MANE-Select" id="ENST00000582163.3">
    <property type="protein sequence ID" value="ENSP00000463092.1"/>
    <property type="RefSeq nucleotide sequence ID" value="NM_002443.4"/>
    <property type="RefSeq protein sequence ID" value="NP_002434.1"/>
</dbReference>
<dbReference type="UCSC" id="uc001jiq.5">
    <molecule id="P08118-1"/>
    <property type="organism name" value="human"/>
</dbReference>
<dbReference type="AGR" id="HGNC:7372"/>
<dbReference type="CTD" id="4477"/>
<dbReference type="DisGeNET" id="4477"/>
<dbReference type="GeneCards" id="MSMB"/>
<dbReference type="HGNC" id="HGNC:7372">
    <property type="gene designation" value="MSMB"/>
</dbReference>
<dbReference type="HPA" id="ENSG00000263639">
    <property type="expression patterns" value="Tissue enriched (prostate)"/>
</dbReference>
<dbReference type="MalaCards" id="MSMB"/>
<dbReference type="MIM" id="157145">
    <property type="type" value="gene"/>
</dbReference>
<dbReference type="MIM" id="611928">
    <property type="type" value="phenotype"/>
</dbReference>
<dbReference type="neXtProt" id="NX_P08118"/>
<dbReference type="OpenTargets" id="ENSG00000263639"/>
<dbReference type="Orphanet" id="1331">
    <property type="disease" value="Familial prostate cancer"/>
</dbReference>
<dbReference type="PharmGKB" id="PA31177"/>
<dbReference type="VEuPathDB" id="HostDB:ENSG00000263639"/>
<dbReference type="eggNOG" id="ENOG502SF48">
    <property type="taxonomic scope" value="Eukaryota"/>
</dbReference>
<dbReference type="GeneTree" id="ENSGT00940000154371"/>
<dbReference type="HOGENOM" id="CLU_2637379_0_0_1"/>
<dbReference type="InParanoid" id="P08118"/>
<dbReference type="OMA" id="ETEIICC"/>
<dbReference type="OrthoDB" id="6076852at2759"/>
<dbReference type="PAN-GO" id="P08118">
    <property type="GO annotations" value="0 GO annotations based on evolutionary models"/>
</dbReference>
<dbReference type="PhylomeDB" id="P08118"/>
<dbReference type="TreeFam" id="TF338336"/>
<dbReference type="PathwayCommons" id="P08118"/>
<dbReference type="SignaLink" id="P08118"/>
<dbReference type="BioGRID-ORCS" id="4477">
    <property type="hits" value="20 hits in 1133 CRISPR screens"/>
</dbReference>
<dbReference type="ChiTaRS" id="MSMB">
    <property type="organism name" value="human"/>
</dbReference>
<dbReference type="EvolutionaryTrace" id="P08118"/>
<dbReference type="GeneWiki" id="MSMB"/>
<dbReference type="GenomeRNAi" id="4477"/>
<dbReference type="Pharos" id="P08118">
    <property type="development level" value="Tbio"/>
</dbReference>
<dbReference type="PRO" id="PR:P08118"/>
<dbReference type="Proteomes" id="UP000005640">
    <property type="component" value="Chromosome 10"/>
</dbReference>
<dbReference type="RNAct" id="P08118">
    <property type="molecule type" value="protein"/>
</dbReference>
<dbReference type="Bgee" id="ENSG00000263639">
    <property type="expression patterns" value="Expressed in trachea and 123 other cell types or tissues"/>
</dbReference>
<dbReference type="ExpressionAtlas" id="P08118">
    <property type="expression patterns" value="baseline and differential"/>
</dbReference>
<dbReference type="GO" id="GO:0005615">
    <property type="term" value="C:extracellular space"/>
    <property type="evidence" value="ECO:0000304"/>
    <property type="project" value="ProtInc"/>
</dbReference>
<dbReference type="GO" id="GO:0005634">
    <property type="term" value="C:nucleus"/>
    <property type="evidence" value="ECO:0000304"/>
    <property type="project" value="ProtInc"/>
</dbReference>
<dbReference type="FunFam" id="2.10.70.10:FF:000137">
    <property type="entry name" value="Beta-microseminoprotein"/>
    <property type="match status" value="1"/>
</dbReference>
<dbReference type="FunFam" id="2.20.25.590:FF:000001">
    <property type="entry name" value="Beta-microseminoprotein"/>
    <property type="match status" value="1"/>
</dbReference>
<dbReference type="Gene3D" id="2.20.25.590">
    <property type="match status" value="1"/>
</dbReference>
<dbReference type="Gene3D" id="2.10.70.10">
    <property type="entry name" value="Complement Module, domain 1"/>
    <property type="match status" value="1"/>
</dbReference>
<dbReference type="InterPro" id="IPR008735">
    <property type="entry name" value="PSP94"/>
</dbReference>
<dbReference type="PANTHER" id="PTHR10500">
    <property type="entry name" value="BETA-MICROSEMINOPROTEIN"/>
    <property type="match status" value="1"/>
</dbReference>
<dbReference type="PANTHER" id="PTHR10500:SF8">
    <property type="entry name" value="BETA-MICROSEMINOPROTEIN"/>
    <property type="match status" value="1"/>
</dbReference>
<dbReference type="Pfam" id="PF05825">
    <property type="entry name" value="PSP94"/>
    <property type="match status" value="1"/>
</dbReference>
<reference key="1">
    <citation type="journal article" date="1987" name="DNA">
        <title>Molecular cloning and sequence of the cDNA for a 94-amino-acid seminal plasma protein secreted by the human prostate.</title>
        <authorList>
            <person name="Mbikay M."/>
            <person name="Nolet S."/>
            <person name="Fournier S."/>
            <person name="Benjannet S."/>
            <person name="Chapdelaine P."/>
            <person name="Paradis G."/>
            <person name="Dube J.Y."/>
            <person name="Tremblay R."/>
            <person name="Lazure C."/>
            <person name="Seidah N.G."/>
            <person name="Chretien M."/>
        </authorList>
    </citation>
    <scope>NUCLEOTIDE SEQUENCE [MRNA] (ISOFORM PSP94)</scope>
</reference>
<reference key="2">
    <citation type="journal article" date="1989" name="Biochem. Biophys. Res. Commun.">
        <title>Molecular cloning of a small prostate protein, known as beta-microseminoprotein, PSP94 or beta-inhibin, and demonstration of transcripts in non-genital tissues.</title>
        <authorList>
            <person name="Ulvsbaeck M."/>
            <person name="Lindstroem C."/>
            <person name="Weiber H."/>
            <person name="Abrahamsson P.-A."/>
            <person name="Lilja H."/>
            <person name="Lundwall A."/>
        </authorList>
    </citation>
    <scope>NUCLEOTIDE SEQUENCE [MRNA] (ISOFORM PSP94)</scope>
</reference>
<reference key="3">
    <citation type="journal article" date="1990" name="Biochem. Biophys. Res. Commun.">
        <title>Cloning and nucleotide sequence analysis of the human beta-microseminoprotein gene.</title>
        <authorList>
            <person name="Green C.B."/>
            <person name="Liu W.Y."/>
            <person name="Kwok S.C.M."/>
        </authorList>
    </citation>
    <scope>NUCLEOTIDE SEQUENCE [GENOMIC DNA]</scope>
</reference>
<reference key="4">
    <citation type="journal article" date="1991" name="Biochim. Biophys. Acta">
        <title>Prostatic secretory protein PSP94: gene organization and promoter sequence in rhesus monkey and human.</title>
        <authorList>
            <person name="Nolet S."/>
            <person name="Mbikay M."/>
            <person name="Chretien M."/>
        </authorList>
    </citation>
    <scope>NUCLEOTIDE SEQUENCE [GENOMIC DNA]</scope>
</reference>
<reference key="5">
    <citation type="journal article" date="1993" name="Cancer Lett.">
        <title>Decreased expression of prostatic secretory protein PSP94 in prostate cancer.</title>
        <authorList>
            <person name="Liu A.Y."/>
            <person name="Bradner R.C."/>
            <person name="Vessella R.L."/>
        </authorList>
    </citation>
    <scope>NUCLEOTIDE SEQUENCE [MRNA] (ISOFORM PSP94)</scope>
    <source>
        <tissue>Prostate</tissue>
    </source>
</reference>
<reference key="6">
    <citation type="journal article" date="1995" name="Oncogene">
        <title>Alternative splicing of PSP94 (prostatic secretory protein of 94 amino acids) mRNA in prostate tissue.</title>
        <authorList>
            <person name="Xuan J.W."/>
            <person name="Chin J.L."/>
            <person name="Guo Y."/>
            <person name="Chambers A.F."/>
            <person name="Finkelman M.A."/>
            <person name="Clarke M.W."/>
        </authorList>
    </citation>
    <scope>NUCLEOTIDE SEQUENCE [MRNA] (ISOFORM PSP57)</scope>
    <scope>TISSUE SPECIFICITY</scope>
    <source>
        <tissue>Prostate</tissue>
    </source>
</reference>
<reference key="7">
    <citation type="submission" date="1996-12" db="EMBL/GenBank/DDBJ databases">
        <title>Prostate specific protein (PSP94) expression in a human endometrial cell line (KLE).</title>
        <authorList>
            <person name="Baijal-Gupta M."/>
            <person name="Clarke M.W."/>
        </authorList>
    </citation>
    <scope>NUCLEOTIDE SEQUENCE [MRNA] (ISOFORM PSP94)</scope>
</reference>
<reference key="8">
    <citation type="submission" date="2003-05" db="EMBL/GenBank/DDBJ databases">
        <title>Cloning of human full-length CDSs in BD Creator(TM) system donor vector.</title>
        <authorList>
            <person name="Kalnine N."/>
            <person name="Chen X."/>
            <person name="Rolfs A."/>
            <person name="Halleck A."/>
            <person name="Hines L."/>
            <person name="Eisenstein S."/>
            <person name="Koundinya M."/>
            <person name="Raphael J."/>
            <person name="Moreira D."/>
            <person name="Kelley T."/>
            <person name="LaBaer J."/>
            <person name="Lin Y."/>
            <person name="Phelan M."/>
            <person name="Farmer A."/>
        </authorList>
    </citation>
    <scope>NUCLEOTIDE SEQUENCE [LARGE SCALE MRNA] (ISOFORM PSP94)</scope>
</reference>
<reference key="9">
    <citation type="submission" date="2004-06" db="EMBL/GenBank/DDBJ databases">
        <title>Cloning of human full open reading frames in Gateway(TM) system entry vector (pDONR201).</title>
        <authorList>
            <person name="Ebert L."/>
            <person name="Schick M."/>
            <person name="Neubert P."/>
            <person name="Schatten R."/>
            <person name="Henze S."/>
            <person name="Korn B."/>
        </authorList>
    </citation>
    <scope>NUCLEOTIDE SEQUENCE [LARGE SCALE MRNA] (ISOFORM PSP94)</scope>
</reference>
<reference key="10">
    <citation type="journal article" date="2004" name="Nature">
        <title>The DNA sequence and comparative analysis of human chromosome 10.</title>
        <authorList>
            <person name="Deloukas P."/>
            <person name="Earthrowl M.E."/>
            <person name="Grafham D.V."/>
            <person name="Rubenfield M."/>
            <person name="French L."/>
            <person name="Steward C.A."/>
            <person name="Sims S.K."/>
            <person name="Jones M.C."/>
            <person name="Searle S."/>
            <person name="Scott C."/>
            <person name="Howe K."/>
            <person name="Hunt S.E."/>
            <person name="Andrews T.D."/>
            <person name="Gilbert J.G.R."/>
            <person name="Swarbreck D."/>
            <person name="Ashurst J.L."/>
            <person name="Taylor A."/>
            <person name="Battles J."/>
            <person name="Bird C.P."/>
            <person name="Ainscough R."/>
            <person name="Almeida J.P."/>
            <person name="Ashwell R.I.S."/>
            <person name="Ambrose K.D."/>
            <person name="Babbage A.K."/>
            <person name="Bagguley C.L."/>
            <person name="Bailey J."/>
            <person name="Banerjee R."/>
            <person name="Bates K."/>
            <person name="Beasley H."/>
            <person name="Bray-Allen S."/>
            <person name="Brown A.J."/>
            <person name="Brown J.Y."/>
            <person name="Burford D.C."/>
            <person name="Burrill W."/>
            <person name="Burton J."/>
            <person name="Cahill P."/>
            <person name="Camire D."/>
            <person name="Carter N.P."/>
            <person name="Chapman J.C."/>
            <person name="Clark S.Y."/>
            <person name="Clarke G."/>
            <person name="Clee C.M."/>
            <person name="Clegg S."/>
            <person name="Corby N."/>
            <person name="Coulson A."/>
            <person name="Dhami P."/>
            <person name="Dutta I."/>
            <person name="Dunn M."/>
            <person name="Faulkner L."/>
            <person name="Frankish A."/>
            <person name="Frankland J.A."/>
            <person name="Garner P."/>
            <person name="Garnett J."/>
            <person name="Gribble S."/>
            <person name="Griffiths C."/>
            <person name="Grocock R."/>
            <person name="Gustafson E."/>
            <person name="Hammond S."/>
            <person name="Harley J.L."/>
            <person name="Hart E."/>
            <person name="Heath P.D."/>
            <person name="Ho T.P."/>
            <person name="Hopkins B."/>
            <person name="Horne J."/>
            <person name="Howden P.J."/>
            <person name="Huckle E."/>
            <person name="Hynds C."/>
            <person name="Johnson C."/>
            <person name="Johnson D."/>
            <person name="Kana A."/>
            <person name="Kay M."/>
            <person name="Kimberley A.M."/>
            <person name="Kershaw J.K."/>
            <person name="Kokkinaki M."/>
            <person name="Laird G.K."/>
            <person name="Lawlor S."/>
            <person name="Lee H.M."/>
            <person name="Leongamornlert D.A."/>
            <person name="Laird G."/>
            <person name="Lloyd C."/>
            <person name="Lloyd D.M."/>
            <person name="Loveland J."/>
            <person name="Lovell J."/>
            <person name="McLaren S."/>
            <person name="McLay K.E."/>
            <person name="McMurray A."/>
            <person name="Mashreghi-Mohammadi M."/>
            <person name="Matthews L."/>
            <person name="Milne S."/>
            <person name="Nickerson T."/>
            <person name="Nguyen M."/>
            <person name="Overton-Larty E."/>
            <person name="Palmer S.A."/>
            <person name="Pearce A.V."/>
            <person name="Peck A.I."/>
            <person name="Pelan S."/>
            <person name="Phillimore B."/>
            <person name="Porter K."/>
            <person name="Rice C.M."/>
            <person name="Rogosin A."/>
            <person name="Ross M.T."/>
            <person name="Sarafidou T."/>
            <person name="Sehra H.K."/>
            <person name="Shownkeen R."/>
            <person name="Skuce C.D."/>
            <person name="Smith M."/>
            <person name="Standring L."/>
            <person name="Sycamore N."/>
            <person name="Tester J."/>
            <person name="Thorpe A."/>
            <person name="Torcasso W."/>
            <person name="Tracey A."/>
            <person name="Tromans A."/>
            <person name="Tsolas J."/>
            <person name="Wall M."/>
            <person name="Walsh J."/>
            <person name="Wang H."/>
            <person name="Weinstock K."/>
            <person name="West A.P."/>
            <person name="Willey D.L."/>
            <person name="Whitehead S.L."/>
            <person name="Wilming L."/>
            <person name="Wray P.W."/>
            <person name="Young L."/>
            <person name="Chen Y."/>
            <person name="Lovering R.C."/>
            <person name="Moschonas N.K."/>
            <person name="Siebert R."/>
            <person name="Fechtel K."/>
            <person name="Bentley D."/>
            <person name="Durbin R.M."/>
            <person name="Hubbard T."/>
            <person name="Doucette-Stamm L."/>
            <person name="Beck S."/>
            <person name="Smith D.R."/>
            <person name="Rogers J."/>
        </authorList>
    </citation>
    <scope>NUCLEOTIDE SEQUENCE [LARGE SCALE GENOMIC DNA]</scope>
</reference>
<reference key="11">
    <citation type="journal article" date="2004" name="Genome Res.">
        <title>The status, quality, and expansion of the NIH full-length cDNA project: the Mammalian Gene Collection (MGC).</title>
        <authorList>
            <consortium name="The MGC Project Team"/>
        </authorList>
    </citation>
    <scope>NUCLEOTIDE SEQUENCE [LARGE SCALE MRNA] (ISOFORM PSP94)</scope>
    <source>
        <tissue>Prostate</tissue>
    </source>
</reference>
<reference key="12">
    <citation type="journal article" date="1999" name="Eur. J. Biochem.">
        <title>New world, but not old world, monkeys carry several genes encoding beta-microseminoprotein.</title>
        <authorList>
            <person name="Maekinen M."/>
            <person name="Valtonen-Andre C."/>
            <person name="Lundwall A."/>
        </authorList>
    </citation>
    <scope>NUCLEOTIDE SEQUENCE [GENOMIC DNA] OF 2-72</scope>
</reference>
<reference key="13">
    <citation type="journal article" date="1985" name="Biochim. Biophys. Acta">
        <title>The amino acid sequence of human beta-microseminoprotein.</title>
        <authorList>
            <person name="Akiyama K."/>
            <person name="Yoshioka Y."/>
            <person name="Schmid K."/>
            <person name="Offner G.D."/>
            <person name="Troxler R.F."/>
            <person name="Tsuda R."/>
            <person name="Hara M."/>
        </authorList>
    </citation>
    <scope>PROTEIN SEQUENCE OF 21-113</scope>
</reference>
<reference key="14">
    <citation type="journal article" date="1984" name="FEBS Lett.">
        <title>Complete amino acid sequence of human seminal plasma beta-inhibin. Prediction of post Gln-Arg cleavage as a maturation site.</title>
        <authorList>
            <person name="Seidah N.G."/>
            <person name="Arbatti N.J."/>
            <person name="Rochemont J."/>
            <person name="Sheth A.R."/>
            <person name="Chretien M."/>
        </authorList>
    </citation>
    <scope>PROTEIN SEQUENCE OF 21-114</scope>
</reference>
<reference key="15">
    <citation type="journal article" date="1991" name="Biochem. Biophys. Res. Commun.">
        <title>Structural identity of immunoglobulin binding factor and prostatic secretory protein of human seminal plasma.</title>
        <authorList>
            <person name="Liang Z.G."/>
            <person name="Kamada M."/>
            <person name="Koide S.S."/>
        </authorList>
    </citation>
    <scope>PROTEIN SEQUENCE OF 21-50 AND 113-114</scope>
</reference>
<reference key="16">
    <citation type="journal article" date="1995" name="Int. J. Biochem. Cell Biol.">
        <title>Human seminal plasma beta-microseminoprotein: its purification, characterization, and immunohistochemical localization.</title>
        <authorList>
            <person name="Ohkubo I."/>
            <person name="Tada T."/>
            <person name="Ochiai Y."/>
            <person name="Ueyama H."/>
            <person name="Eimoto T."/>
            <person name="Sasaki M."/>
        </authorList>
    </citation>
    <scope>PROTEIN SEQUENCE OF 21-41</scope>
    <scope>TISSUE SPECIFICITY</scope>
    <source>
        <tissue>Semen</tissue>
    </source>
</reference>
<reference key="17">
    <citation type="journal article" date="2002" name="Proteomics">
        <title>Newly identified proteins in human nasal lavage fluid from non-smokers and smokers using two-dimensional gel electrophoresis and peptide mass fingerprinting.</title>
        <authorList>
            <person name="Ghafouri B."/>
            <person name="Stahlbom B."/>
            <person name="Tagesson C."/>
            <person name="Lindahl M."/>
        </authorList>
    </citation>
    <scope>PROTEIN SEQUENCE OF 21-32</scope>
</reference>
<reference key="18">
    <citation type="journal article" date="2005" name="Biochem. J.">
        <title>Identification, purification and characterization of a novel human blood protein with binding affinity for prostate secretory protein of 94 amino acids.</title>
        <authorList>
            <person name="Reeves J.R."/>
            <person name="Xuan J.W."/>
            <person name="Arfanis K."/>
            <person name="Morin C."/>
            <person name="Garde S.V."/>
            <person name="Ruiz M.T."/>
            <person name="Wisniewski J."/>
            <person name="Panchal C."/>
            <person name="Tanner J.E."/>
        </authorList>
    </citation>
    <scope>INTERACTION WITH PI16</scope>
</reference>
<reference key="19">
    <citation type="journal article" date="2008" name="Nat. Genet.">
        <title>Multiple loci identified in a genome-wide association study of prostate cancer.</title>
        <authorList>
            <person name="Thomas G."/>
            <person name="Jacobs K.B."/>
            <person name="Yeager M."/>
            <person name="Kraft P."/>
            <person name="Wacholder S."/>
            <person name="Orr N."/>
            <person name="Yu K."/>
            <person name="Chatterjee N."/>
            <person name="Welch R."/>
            <person name="Hutchinson A."/>
            <person name="Crenshaw A."/>
            <person name="Cancel-Tassin G."/>
            <person name="Staats B.J."/>
            <person name="Wang Z."/>
            <person name="Gonzalez-Bosquet J."/>
            <person name="Fang J."/>
            <person name="Deng X."/>
            <person name="Berndt S.I."/>
            <person name="Calle E.E."/>
            <person name="Feigelson H.S."/>
            <person name="Thun M.J."/>
            <person name="Rodriguez C."/>
            <person name="Albanes D."/>
            <person name="Virtamo J."/>
            <person name="Weinstein S."/>
            <person name="Schumacher F.R."/>
            <person name="Giovannucci E."/>
            <person name="Willett W.C."/>
            <person name="Cussenot O."/>
            <person name="Valeri A."/>
            <person name="Andriole G.L."/>
            <person name="Crawford E.D."/>
            <person name="Tucker M."/>
            <person name="Gerhard D.S."/>
            <person name="Fraumeni J.F. Jr."/>
            <person name="Hoover R."/>
            <person name="Hayes R.B."/>
            <person name="Hunter D.J."/>
            <person name="Chanock S.J."/>
        </authorList>
    </citation>
    <scope>INVOLVEMENT IN SUSCEPTIBILITY TO HEREDITARY PROSTATE CANCER</scope>
</reference>
<reference key="20">
    <citation type="journal article" date="2013" name="Hum. Mutat.">
        <title>Investigation of the relationship between prostate cancer and MSMB and NCOA4 genetic variants and protein expression.</title>
        <authorList>
            <person name="Fitzgerald L.M."/>
            <person name="Zhang X."/>
            <person name="Kolb S."/>
            <person name="Kwon E.M."/>
            <person name="Liew Y.C."/>
            <person name="Hurtado-Coll A."/>
            <person name="Knudsen B.S."/>
            <person name="Ostrander E.A."/>
            <person name="Stanford J.L."/>
        </authorList>
    </citation>
    <scope>INVOLVEMENT IN SUSCEPTIBILITY TO HEREDITARY PROSTATE CANCER</scope>
</reference>
<reference key="21">
    <citation type="journal article" date="2006" name="J. Mol. Biol.">
        <title>Solution structures of human and porcine beta-microseminoprotein.</title>
        <authorList>
            <person name="Ghasriani H."/>
            <person name="Teilum K."/>
            <person name="Johnsson Y."/>
            <person name="Fernlund P."/>
            <person name="Drakenberg T."/>
        </authorList>
    </citation>
    <scope>STRUCTURE BY NMR OF 21-114</scope>
    <scope>DISULFIDE BONDS</scope>
</reference>
<reference key="22">
    <citation type="journal article" date="2010" name="J. Mol. Biol.">
        <title>Crystal structure of prostate secretory protein PSP94 shows an edge-to-edge association of two monomers to form a homodimer.</title>
        <authorList>
            <person name="Kumar A."/>
            <person name="Jagtap D.D."/>
            <person name="Mahale S.D."/>
            <person name="Kumar M."/>
        </authorList>
    </citation>
    <scope>X-RAY CRYSTALLOGRAPHY (2.3 ANGSTROMS) OF 21-114</scope>
    <scope>SUBUNIT</scope>
    <scope>DISULFIDE BONDS</scope>
</reference>
<keyword id="KW-0002">3D-structure</keyword>
<keyword id="KW-0025">Alternative splicing</keyword>
<keyword id="KW-0903">Direct protein sequencing</keyword>
<keyword id="KW-1015">Disulfide bond</keyword>
<keyword id="KW-1267">Proteomics identification</keyword>
<keyword id="KW-1185">Reference proteome</keyword>
<keyword id="KW-0964">Secreted</keyword>
<keyword id="KW-0732">Signal</keyword>
<comment type="subunit">
    <text evidence="2 4">Homodimer; Interacts with PI16.</text>
</comment>
<comment type="interaction">
    <interactant intactId="EBI-10195681">
        <id>P08118</id>
    </interactant>
    <interactant intactId="EBI-347996">
        <id>O43765</id>
        <label>SGTA</label>
    </interactant>
    <organismsDiffer>false</organismsDiffer>
    <experiments>3</experiments>
</comment>
<comment type="subcellular location">
    <subcellularLocation>
        <location>Secreted</location>
    </subcellularLocation>
    <text>Sperm surface.</text>
</comment>
<comment type="alternative products">
    <event type="alternative splicing"/>
    <isoform>
        <id>P08118-1</id>
        <name>PSP94</name>
        <sequence type="displayed"/>
    </isoform>
    <isoform>
        <id>P08118-2</id>
        <name>PSP57</name>
        <sequence type="described" ref="VSP_003275 VSP_003276"/>
    </isoform>
</comment>
<comment type="tissue specificity">
    <text evidence="7 8">Strongly expressed in prostate, liver, kidney, breast and penis. Also expressed in pancreas, esophagus, stomach, deodenum, colon, trachea, lung, salivary glands and fallopian tube. PSP94 is expressed in lung and breast, whereas PSP57 is found in kidney and bladder.</text>
</comment>
<comment type="disease">
    <disease id="DI-02660">
        <name>Prostate cancer, hereditary, 13</name>
        <acronym>HPC13</acronym>
        <description>A condition associated with familial predisposition to cancer of the prostate. Most prostate cancers are adenocarcinomas that develop in the acini of the prostatic ducts. Other rare histopathologic types of prostate cancer that occur in approximately 5% of patients include small cell carcinoma, mucinous carcinoma, prostatic ductal carcinoma, transitional cell carcinoma, squamous cell carcinoma, basal cell carcinoma, adenoid cystic carcinoma (basaloid), signet-ring cell carcinoma and neuroendocrine carcinoma.</description>
        <dbReference type="MIM" id="611928"/>
    </disease>
    <text>Disease susceptibility is associated with variants affecting the gene represented in this entry.</text>
</comment>
<comment type="miscellaneous">
    <text>Specific receptors for this protein are found on spermatozoa and in the prostate.</text>
</comment>
<comment type="similarity">
    <text evidence="10">Belongs to the beta-microseminoprotein family.</text>
</comment>
<comment type="caution">
    <text evidence="10">Was originally thought to inhibit the secretion of FSH by pituitary cells.</text>
</comment>
<feature type="signal peptide" evidence="1 3 5 6 8">
    <location>
        <begin position="1"/>
        <end position="20"/>
    </location>
</feature>
<feature type="chain" id="PRO_0000019268" description="Beta-microseminoprotein">
    <location>
        <begin position="21"/>
        <end position="114"/>
    </location>
</feature>
<feature type="disulfide bond" evidence="4">
    <location>
        <begin position="22"/>
        <end position="70"/>
    </location>
</feature>
<feature type="disulfide bond" evidence="4">
    <location>
        <begin position="38"/>
        <end position="62"/>
    </location>
</feature>
<feature type="disulfide bond" evidence="4">
    <location>
        <begin position="57"/>
        <end position="93"/>
    </location>
</feature>
<feature type="disulfide bond" evidence="4">
    <location>
        <begin position="60"/>
        <end position="69"/>
    </location>
</feature>
<feature type="disulfide bond">
    <location>
        <begin position="84"/>
        <end position="107"/>
    </location>
</feature>
<feature type="splice variant" id="VSP_003275" description="In isoform PSP57." evidence="9">
    <original>KCMDLKGNKHPINSEWQTDNCETCTCYETEISCCTLVSTPV</original>
    <variation>MFLHLWVMTKTTAKESSRRRTASISWWRRRTQKRPVLSVNG</variation>
    <location>
        <begin position="37"/>
        <end position="77"/>
    </location>
</feature>
<feature type="splice variant" id="VSP_003276" description="In isoform PSP57." evidence="9">
    <location>
        <begin position="78"/>
        <end position="114"/>
    </location>
</feature>
<feature type="sequence variant" id="VAR_011935" description="In dbSNP:rs1804776.">
    <original>L</original>
    <variation>S</variation>
    <location>
        <position position="17"/>
    </location>
</feature>
<feature type="sequence variant" id="VAR_011936" description="In dbSNP:rs1804778.">
    <original>I</original>
    <variation>M</variation>
    <location>
        <position position="25"/>
    </location>
</feature>
<feature type="sequence variant" id="VAR_011937" description="In dbSNP:rs1804780.">
    <original>W</original>
    <variation>R</variation>
    <location>
        <position position="52"/>
    </location>
</feature>
<feature type="sequence variant" id="VAR_011938" description="In dbSNP:rs1804468.">
    <original>Q</original>
    <variation>R</variation>
    <location>
        <position position="53"/>
    </location>
</feature>
<feature type="sequence variant" id="VAR_011939" description="In dbSNP:rs1802774.">
    <original>D</original>
    <variation>A</variation>
    <location>
        <position position="80"/>
    </location>
</feature>
<feature type="sequence variant" id="VAR_011940" description="In dbSNP:rs1802771.">
    <original>I</original>
    <variation>T</variation>
    <location>
        <position position="87"/>
    </location>
</feature>
<feature type="sequence variant" id="VAR_011941" description="In dbSNP:rs1804469.">
    <original>E</original>
    <variation>G</variation>
    <location>
        <position position="91"/>
    </location>
</feature>
<feature type="sequence variant" id="VAR_011942" description="In dbSNP:rs1804461.">
    <original>D</original>
    <variation>G</variation>
    <location>
        <position position="92"/>
    </location>
</feature>
<feature type="sequence variant" id="VAR_011943" description="In dbSNP:rs1804464.">
    <original>V</original>
    <variation>L</variation>
    <location>
        <position position="98"/>
    </location>
</feature>
<feature type="sequence conflict" description="In Ref. 14; AA sequence." evidence="10" ref="14">
    <original>I</original>
    <variation>G</variation>
    <location>
        <position position="113"/>
    </location>
</feature>
<feature type="strand" evidence="11">
    <location>
        <begin position="22"/>
        <end position="26"/>
    </location>
</feature>
<feature type="strand" evidence="11">
    <location>
        <begin position="33"/>
        <end position="35"/>
    </location>
</feature>
<feature type="strand" evidence="11">
    <location>
        <begin position="51"/>
        <end position="53"/>
    </location>
</feature>
<feature type="strand" evidence="11">
    <location>
        <begin position="57"/>
        <end position="62"/>
    </location>
</feature>
<feature type="strand" evidence="11">
    <location>
        <begin position="64"/>
        <end position="71"/>
    </location>
</feature>
<feature type="strand" evidence="11">
    <location>
        <begin position="75"/>
        <end position="79"/>
    </location>
</feature>
<feature type="turn" evidence="11">
    <location>
        <begin position="81"/>
        <end position="83"/>
    </location>
</feature>
<feature type="strand" evidence="11">
    <location>
        <begin position="84"/>
        <end position="89"/>
    </location>
</feature>
<feature type="helix" evidence="11">
    <location>
        <begin position="90"/>
        <end position="92"/>
    </location>
</feature>
<feature type="strand" evidence="11">
    <location>
        <begin position="94"/>
        <end position="101"/>
    </location>
</feature>
<feature type="strand" evidence="11">
    <location>
        <begin position="110"/>
        <end position="113"/>
    </location>
</feature>